<name>MDH_HALH5</name>
<dbReference type="EC" id="1.1.1.37" evidence="1"/>
<dbReference type="EMBL" id="BA000004">
    <property type="protein sequence ID" value="BAB06877.1"/>
    <property type="molecule type" value="Genomic_DNA"/>
</dbReference>
<dbReference type="PIR" id="F84044">
    <property type="entry name" value="F84044"/>
</dbReference>
<dbReference type="RefSeq" id="WP_010899301.1">
    <property type="nucleotide sequence ID" value="NC_002570.2"/>
</dbReference>
<dbReference type="SMR" id="Q9K849"/>
<dbReference type="STRING" id="272558.gene:10729070"/>
<dbReference type="KEGG" id="bha:BH3158"/>
<dbReference type="eggNOG" id="COG0039">
    <property type="taxonomic scope" value="Bacteria"/>
</dbReference>
<dbReference type="HOGENOM" id="CLU_045401_2_1_9"/>
<dbReference type="OrthoDB" id="9802969at2"/>
<dbReference type="Proteomes" id="UP000001258">
    <property type="component" value="Chromosome"/>
</dbReference>
<dbReference type="GO" id="GO:0004459">
    <property type="term" value="F:L-lactate dehydrogenase activity"/>
    <property type="evidence" value="ECO:0007669"/>
    <property type="project" value="TreeGrafter"/>
</dbReference>
<dbReference type="GO" id="GO:0030060">
    <property type="term" value="F:L-malate dehydrogenase (NAD+) activity"/>
    <property type="evidence" value="ECO:0007669"/>
    <property type="project" value="UniProtKB-UniRule"/>
</dbReference>
<dbReference type="GO" id="GO:0006089">
    <property type="term" value="P:lactate metabolic process"/>
    <property type="evidence" value="ECO:0007669"/>
    <property type="project" value="TreeGrafter"/>
</dbReference>
<dbReference type="GO" id="GO:0006099">
    <property type="term" value="P:tricarboxylic acid cycle"/>
    <property type="evidence" value="ECO:0007669"/>
    <property type="project" value="UniProtKB-UniRule"/>
</dbReference>
<dbReference type="CDD" id="cd01339">
    <property type="entry name" value="LDH-like_MDH"/>
    <property type="match status" value="1"/>
</dbReference>
<dbReference type="FunFam" id="3.40.50.720:FF:000018">
    <property type="entry name" value="Malate dehydrogenase"/>
    <property type="match status" value="1"/>
</dbReference>
<dbReference type="FunFam" id="3.90.110.10:FF:000004">
    <property type="entry name" value="Malate dehydrogenase"/>
    <property type="match status" value="1"/>
</dbReference>
<dbReference type="Gene3D" id="3.90.110.10">
    <property type="entry name" value="Lactate dehydrogenase/glycoside hydrolase, family 4, C-terminal"/>
    <property type="match status" value="1"/>
</dbReference>
<dbReference type="Gene3D" id="3.40.50.720">
    <property type="entry name" value="NAD(P)-binding Rossmann-like Domain"/>
    <property type="match status" value="1"/>
</dbReference>
<dbReference type="HAMAP" id="MF_00487">
    <property type="entry name" value="Malate_dehydrog_3"/>
    <property type="match status" value="1"/>
</dbReference>
<dbReference type="InterPro" id="IPR001557">
    <property type="entry name" value="L-lactate/malate_DH"/>
</dbReference>
<dbReference type="InterPro" id="IPR022383">
    <property type="entry name" value="Lactate/malate_DH_C"/>
</dbReference>
<dbReference type="InterPro" id="IPR001236">
    <property type="entry name" value="Lactate/malate_DH_N"/>
</dbReference>
<dbReference type="InterPro" id="IPR015955">
    <property type="entry name" value="Lactate_DH/Glyco_Ohase_4_C"/>
</dbReference>
<dbReference type="InterPro" id="IPR011275">
    <property type="entry name" value="Malate_DH_type3"/>
</dbReference>
<dbReference type="InterPro" id="IPR036291">
    <property type="entry name" value="NAD(P)-bd_dom_sf"/>
</dbReference>
<dbReference type="NCBIfam" id="TIGR01763">
    <property type="entry name" value="MalateDH_bact"/>
    <property type="match status" value="1"/>
</dbReference>
<dbReference type="NCBIfam" id="NF004863">
    <property type="entry name" value="PRK06223.1"/>
    <property type="match status" value="1"/>
</dbReference>
<dbReference type="PANTHER" id="PTHR43128">
    <property type="entry name" value="L-2-HYDROXYCARBOXYLATE DEHYDROGENASE (NAD(P)(+))"/>
    <property type="match status" value="1"/>
</dbReference>
<dbReference type="PANTHER" id="PTHR43128:SF16">
    <property type="entry name" value="L-LACTATE DEHYDROGENASE"/>
    <property type="match status" value="1"/>
</dbReference>
<dbReference type="Pfam" id="PF02866">
    <property type="entry name" value="Ldh_1_C"/>
    <property type="match status" value="1"/>
</dbReference>
<dbReference type="Pfam" id="PF00056">
    <property type="entry name" value="Ldh_1_N"/>
    <property type="match status" value="1"/>
</dbReference>
<dbReference type="PIRSF" id="PIRSF000102">
    <property type="entry name" value="Lac_mal_DH"/>
    <property type="match status" value="1"/>
</dbReference>
<dbReference type="PRINTS" id="PR00086">
    <property type="entry name" value="LLDHDRGNASE"/>
</dbReference>
<dbReference type="SUPFAM" id="SSF56327">
    <property type="entry name" value="LDH C-terminal domain-like"/>
    <property type="match status" value="1"/>
</dbReference>
<dbReference type="SUPFAM" id="SSF51735">
    <property type="entry name" value="NAD(P)-binding Rossmann-fold domains"/>
    <property type="match status" value="1"/>
</dbReference>
<comment type="function">
    <text evidence="1">Catalyzes the reversible oxidation of malate to oxaloacetate.</text>
</comment>
<comment type="catalytic activity">
    <reaction evidence="1">
        <text>(S)-malate + NAD(+) = oxaloacetate + NADH + H(+)</text>
        <dbReference type="Rhea" id="RHEA:21432"/>
        <dbReference type="ChEBI" id="CHEBI:15378"/>
        <dbReference type="ChEBI" id="CHEBI:15589"/>
        <dbReference type="ChEBI" id="CHEBI:16452"/>
        <dbReference type="ChEBI" id="CHEBI:57540"/>
        <dbReference type="ChEBI" id="CHEBI:57945"/>
        <dbReference type="EC" id="1.1.1.37"/>
    </reaction>
</comment>
<comment type="similarity">
    <text evidence="1">Belongs to the LDH/MDH superfamily. MDH type 3 family.</text>
</comment>
<evidence type="ECO:0000255" key="1">
    <source>
        <dbReference type="HAMAP-Rule" id="MF_00487"/>
    </source>
</evidence>
<keyword id="KW-0520">NAD</keyword>
<keyword id="KW-0560">Oxidoreductase</keyword>
<keyword id="KW-0597">Phosphoprotein</keyword>
<keyword id="KW-1185">Reference proteome</keyword>
<keyword id="KW-0816">Tricarboxylic acid cycle</keyword>
<gene>
    <name evidence="1" type="primary">mdh</name>
    <name type="synonym">citH</name>
    <name type="ordered locus">BH3158</name>
</gene>
<reference key="1">
    <citation type="journal article" date="2000" name="Nucleic Acids Res.">
        <title>Complete genome sequence of the alkaliphilic bacterium Bacillus halodurans and genomic sequence comparison with Bacillus subtilis.</title>
        <authorList>
            <person name="Takami H."/>
            <person name="Nakasone K."/>
            <person name="Takaki Y."/>
            <person name="Maeno G."/>
            <person name="Sasaki R."/>
            <person name="Masui N."/>
            <person name="Fuji F."/>
            <person name="Hirama C."/>
            <person name="Nakamura Y."/>
            <person name="Ogasawara N."/>
            <person name="Kuhara S."/>
            <person name="Horikoshi K."/>
        </authorList>
    </citation>
    <scope>NUCLEOTIDE SEQUENCE [LARGE SCALE GENOMIC DNA]</scope>
    <source>
        <strain>ATCC BAA-125 / DSM 18197 / FERM 7344 / JCM 9153 / C-125</strain>
    </source>
</reference>
<accession>Q9K849</accession>
<proteinExistence type="inferred from homology"/>
<protein>
    <recommendedName>
        <fullName evidence="1">Malate dehydrogenase</fullName>
        <ecNumber evidence="1">1.1.1.37</ecNumber>
    </recommendedName>
</protein>
<sequence length="314" mass="33681">MAIKRRKVSVIGAGFTGATTALMVAQKELGDVVLVDIPQMEGPTKGKALDMLESTPVQGVDVNITGTSSYEYTKDSDVVVITAGIARKPGMSRDDLVSTNAGIMKAVTKEVVKHSPNAYIIVLTNPADAMTYTVYKESGFPKNRVIGQSGVLDTARFRTFVAQELNLSVEDITGFVLGGHGDDMVPLIRYSYAGGIPLEKLLPQERIDAIVERTRKGGGEIVGLLGNGSAYYAPAASLAEMVEAILKDKKRVLPTIAYLEGEYGYEDIYVGVPTILGGDGIEKVIELDLTDEEKATFAKSIESVRNVMSALPKE</sequence>
<organism>
    <name type="scientific">Halalkalibacterium halodurans (strain ATCC BAA-125 / DSM 18197 / FERM 7344 / JCM 9153 / C-125)</name>
    <name type="common">Bacillus halodurans</name>
    <dbReference type="NCBI Taxonomy" id="272558"/>
    <lineage>
        <taxon>Bacteria</taxon>
        <taxon>Bacillati</taxon>
        <taxon>Bacillota</taxon>
        <taxon>Bacilli</taxon>
        <taxon>Bacillales</taxon>
        <taxon>Bacillaceae</taxon>
        <taxon>Halalkalibacterium (ex Joshi et al. 2022)</taxon>
    </lineage>
</organism>
<feature type="chain" id="PRO_0000113429" description="Malate dehydrogenase">
    <location>
        <begin position="1"/>
        <end position="314"/>
    </location>
</feature>
<feature type="active site" description="Proton acceptor" evidence="1">
    <location>
        <position position="180"/>
    </location>
</feature>
<feature type="binding site" evidence="1">
    <location>
        <begin position="12"/>
        <end position="17"/>
    </location>
    <ligand>
        <name>NAD(+)</name>
        <dbReference type="ChEBI" id="CHEBI:57540"/>
    </ligand>
</feature>
<feature type="binding site" evidence="1">
    <location>
        <position position="36"/>
    </location>
    <ligand>
        <name>NAD(+)</name>
        <dbReference type="ChEBI" id="CHEBI:57540"/>
    </ligand>
</feature>
<feature type="binding site" evidence="1">
    <location>
        <position position="87"/>
    </location>
    <ligand>
        <name>substrate</name>
    </ligand>
</feature>
<feature type="binding site" evidence="1">
    <location>
        <position position="93"/>
    </location>
    <ligand>
        <name>substrate</name>
    </ligand>
</feature>
<feature type="binding site" evidence="1">
    <location>
        <position position="100"/>
    </location>
    <ligand>
        <name>NAD(+)</name>
        <dbReference type="ChEBI" id="CHEBI:57540"/>
    </ligand>
</feature>
<feature type="binding site" evidence="1">
    <location>
        <begin position="123"/>
        <end position="125"/>
    </location>
    <ligand>
        <name>NAD(+)</name>
        <dbReference type="ChEBI" id="CHEBI:57540"/>
    </ligand>
</feature>
<feature type="binding site" evidence="1">
    <location>
        <position position="125"/>
    </location>
    <ligand>
        <name>substrate</name>
    </ligand>
</feature>
<feature type="binding site" evidence="1">
    <location>
        <position position="156"/>
    </location>
    <ligand>
        <name>substrate</name>
    </ligand>
</feature>
<feature type="modified residue" description="Phosphoserine" evidence="1">
    <location>
        <position position="149"/>
    </location>
</feature>